<comment type="function">
    <text evidence="1">Mediates the conversion of cyclohexane-1-carbonyl-CoA (ChCoA) into cyclohex-1-ene-1-carbonyl-CoA in biosynthesis of cyclohexane-1-carboxylate, a by-product produced during fermentation of benzoate and crotonate to acetate.</text>
</comment>
<comment type="catalytic activity">
    <reaction evidence="1">
        <text>cyclohexane-1-carbonyl-CoA + oxidized [electron-transfer flavoprotein] + H(+) = cyclohex-1-ene-1-carbonyl-CoA + reduced [electron-transfer flavoprotein]</text>
        <dbReference type="Rhea" id="RHEA:38935"/>
        <dbReference type="Rhea" id="RHEA-COMP:10685"/>
        <dbReference type="Rhea" id="RHEA-COMP:10686"/>
        <dbReference type="ChEBI" id="CHEBI:15378"/>
        <dbReference type="ChEBI" id="CHEBI:57692"/>
        <dbReference type="ChEBI" id="CHEBI:58307"/>
        <dbReference type="ChEBI" id="CHEBI:76270"/>
        <dbReference type="ChEBI" id="CHEBI:76271"/>
        <dbReference type="EC" id="1.3.8.11"/>
    </reaction>
</comment>
<comment type="cofactor">
    <cofactor evidence="1">
        <name>FAD</name>
        <dbReference type="ChEBI" id="CHEBI:57692"/>
    </cofactor>
</comment>
<comment type="biophysicochemical properties">
    <kinetics>
        <KM evidence="1">22 uM for cyclohexane-1-carbonyl-CoA</KM>
    </kinetics>
</comment>
<comment type="subunit">
    <text evidence="1">Homotetramer.</text>
</comment>
<comment type="similarity">
    <text evidence="3">Belongs to the acyl-CoA dehydrogenase family.</text>
</comment>
<organism>
    <name type="scientific">Syntrophus aciditrophicus (strain SB)</name>
    <dbReference type="NCBI Taxonomy" id="56780"/>
    <lineage>
        <taxon>Bacteria</taxon>
        <taxon>Pseudomonadati</taxon>
        <taxon>Thermodesulfobacteriota</taxon>
        <taxon>Syntrophia</taxon>
        <taxon>Syntrophales</taxon>
        <taxon>Syntrophaceae</taxon>
        <taxon>Syntrophus</taxon>
    </lineage>
</organism>
<reference key="1">
    <citation type="journal article" date="2007" name="Proc. Natl. Acad. Sci. U.S.A.">
        <title>The genome of Syntrophus aciditrophicus: life at the thermodynamic limit of microbial growth.</title>
        <authorList>
            <person name="McInerney M.J."/>
            <person name="Rohlin L."/>
            <person name="Mouttaki H."/>
            <person name="Kim U."/>
            <person name="Krupp R.S."/>
            <person name="Rios-Hernandez L."/>
            <person name="Sieber J."/>
            <person name="Struchtemeyer C.G."/>
            <person name="Bhattacharyya A."/>
            <person name="Campbell J.W."/>
            <person name="Gunsalus R.P."/>
        </authorList>
    </citation>
    <scope>NUCLEOTIDE SEQUENCE [LARGE SCALE GENOMIC DNA]</scope>
    <source>
        <strain>SB</strain>
    </source>
</reference>
<reference key="2">
    <citation type="journal article" date="2013" name="J. Bacteriol.">
        <title>Cyclohexanecarboxyl-coenzyme A (CoA) and cyclohex-1-ene-1-carboxyl-CoA dehydrogenases, two enzymes involved in the fermentation of benzoate and crotonate in Syntrophus aciditrophicus.</title>
        <authorList>
            <person name="Kung J.W."/>
            <person name="Seifert J."/>
            <person name="von Bergen M."/>
            <person name="Boll M."/>
        </authorList>
    </citation>
    <scope>IDENTIFICATION BY MASS SPECTROMETRY</scope>
    <scope>FUNCTION</scope>
    <scope>CATALYTIC ACTIVITY</scope>
    <scope>COFACTOR</scope>
    <scope>SUBUNIT</scope>
    <scope>BIOPHYSICOCHEMICAL PROPERTIES</scope>
</reference>
<proteinExistence type="evidence at protein level"/>
<feature type="chain" id="PRO_0000430698" description="Cyclohexane-1-carbonyl-CoA dehydrogenase">
    <location>
        <begin position="1"/>
        <end position="384"/>
    </location>
</feature>
<dbReference type="EC" id="1.3.8.11" evidence="1"/>
<dbReference type="EMBL" id="CP000252">
    <property type="protein sequence ID" value="ABC76100.1"/>
    <property type="molecule type" value="Genomic_DNA"/>
</dbReference>
<dbReference type="RefSeq" id="WP_011416134.1">
    <property type="nucleotide sequence ID" value="NC_007759.1"/>
</dbReference>
<dbReference type="SMR" id="Q2LQP0"/>
<dbReference type="STRING" id="56780.SYN_02586"/>
<dbReference type="KEGG" id="sat:SYN_02586"/>
<dbReference type="eggNOG" id="COG1960">
    <property type="taxonomic scope" value="Bacteria"/>
</dbReference>
<dbReference type="HOGENOM" id="CLU_018204_0_2_7"/>
<dbReference type="InParanoid" id="Q2LQP0"/>
<dbReference type="OrthoDB" id="9765339at2"/>
<dbReference type="BioCyc" id="MetaCyc:MONOMER-18318"/>
<dbReference type="SABIO-RK" id="Q2LQP0"/>
<dbReference type="Proteomes" id="UP000001933">
    <property type="component" value="Chromosome"/>
</dbReference>
<dbReference type="GO" id="GO:0003995">
    <property type="term" value="F:acyl-CoA dehydrogenase activity"/>
    <property type="evidence" value="ECO:0007669"/>
    <property type="project" value="InterPro"/>
</dbReference>
<dbReference type="GO" id="GO:0050660">
    <property type="term" value="F:flavin adenine dinucleotide binding"/>
    <property type="evidence" value="ECO:0000314"/>
    <property type="project" value="UniProtKB"/>
</dbReference>
<dbReference type="GO" id="GO:0052890">
    <property type="term" value="F:oxidoreductase activity, acting on the CH-CH group of donors, with a flavin as acceptor"/>
    <property type="evidence" value="ECO:0000314"/>
    <property type="project" value="UniProtKB"/>
</dbReference>
<dbReference type="GO" id="GO:0051262">
    <property type="term" value="P:protein tetramerization"/>
    <property type="evidence" value="ECO:0000314"/>
    <property type="project" value="UniProtKB"/>
</dbReference>
<dbReference type="FunFam" id="2.40.110.10:FF:000009">
    <property type="entry name" value="Acyl-CoA dehydrogenase"/>
    <property type="match status" value="1"/>
</dbReference>
<dbReference type="FunFam" id="1.20.140.10:FF:000011">
    <property type="entry name" value="Medium-chain specific acyl-CoA dehydrogenase, mitochondrial"/>
    <property type="match status" value="1"/>
</dbReference>
<dbReference type="Gene3D" id="1.10.540.10">
    <property type="entry name" value="Acyl-CoA dehydrogenase/oxidase, N-terminal domain"/>
    <property type="match status" value="1"/>
</dbReference>
<dbReference type="Gene3D" id="2.40.110.10">
    <property type="entry name" value="Butyryl-CoA Dehydrogenase, subunit A, domain 2"/>
    <property type="match status" value="1"/>
</dbReference>
<dbReference type="Gene3D" id="1.20.140.10">
    <property type="entry name" value="Butyryl-CoA Dehydrogenase, subunit A, domain 3"/>
    <property type="match status" value="1"/>
</dbReference>
<dbReference type="InterPro" id="IPR006089">
    <property type="entry name" value="Acyl-CoA_DH_CS"/>
</dbReference>
<dbReference type="InterPro" id="IPR006091">
    <property type="entry name" value="Acyl-CoA_Oxase/DH_mid-dom"/>
</dbReference>
<dbReference type="InterPro" id="IPR046373">
    <property type="entry name" value="Acyl-CoA_Oxase/DH_mid-dom_sf"/>
</dbReference>
<dbReference type="InterPro" id="IPR036250">
    <property type="entry name" value="AcylCo_DH-like_C"/>
</dbReference>
<dbReference type="InterPro" id="IPR009075">
    <property type="entry name" value="AcylCo_DH/oxidase_C"/>
</dbReference>
<dbReference type="InterPro" id="IPR013786">
    <property type="entry name" value="AcylCoA_DH/ox_N"/>
</dbReference>
<dbReference type="InterPro" id="IPR037069">
    <property type="entry name" value="AcylCoA_DH/ox_N_sf"/>
</dbReference>
<dbReference type="InterPro" id="IPR009100">
    <property type="entry name" value="AcylCoA_DH/oxidase_NM_dom_sf"/>
</dbReference>
<dbReference type="InterPro" id="IPR054991">
    <property type="entry name" value="CyhCrbnylCoADH"/>
</dbReference>
<dbReference type="NCBIfam" id="NF043006">
    <property type="entry name" value="CyhCrbnylCoADH"/>
    <property type="match status" value="1"/>
</dbReference>
<dbReference type="PANTHER" id="PTHR43884">
    <property type="entry name" value="ACYL-COA DEHYDROGENASE"/>
    <property type="match status" value="1"/>
</dbReference>
<dbReference type="PANTHER" id="PTHR43884:SF12">
    <property type="entry name" value="ISOVALERYL-COA DEHYDROGENASE, MITOCHONDRIAL-RELATED"/>
    <property type="match status" value="1"/>
</dbReference>
<dbReference type="Pfam" id="PF00441">
    <property type="entry name" value="Acyl-CoA_dh_1"/>
    <property type="match status" value="1"/>
</dbReference>
<dbReference type="Pfam" id="PF02770">
    <property type="entry name" value="Acyl-CoA_dh_M"/>
    <property type="match status" value="1"/>
</dbReference>
<dbReference type="Pfam" id="PF02771">
    <property type="entry name" value="Acyl-CoA_dh_N"/>
    <property type="match status" value="1"/>
</dbReference>
<dbReference type="PIRSF" id="PIRSF016578">
    <property type="entry name" value="HsaA"/>
    <property type="match status" value="1"/>
</dbReference>
<dbReference type="SUPFAM" id="SSF47203">
    <property type="entry name" value="Acyl-CoA dehydrogenase C-terminal domain-like"/>
    <property type="match status" value="1"/>
</dbReference>
<dbReference type="SUPFAM" id="SSF56645">
    <property type="entry name" value="Acyl-CoA dehydrogenase NM domain-like"/>
    <property type="match status" value="1"/>
</dbReference>
<dbReference type="PROSITE" id="PS00073">
    <property type="entry name" value="ACYL_COA_DH_2"/>
    <property type="match status" value="1"/>
</dbReference>
<keyword id="KW-0274">FAD</keyword>
<keyword id="KW-0285">Flavoprotein</keyword>
<keyword id="KW-0560">Oxidoreductase</keyword>
<keyword id="KW-1185">Reference proteome</keyword>
<name>CHCOA_SYNAS</name>
<evidence type="ECO:0000269" key="1">
    <source>
    </source>
</evidence>
<evidence type="ECO:0000303" key="2">
    <source>
    </source>
</evidence>
<evidence type="ECO:0000305" key="3"/>
<evidence type="ECO:0000312" key="4">
    <source>
        <dbReference type="EMBL" id="ABC76100.1"/>
    </source>
</evidence>
<sequence>MYINTETEDLKTAIDAIRKAVKDRIAPLAAEVDDSGVIKPEIYDLLWDLGLMTVTYPPEYGGSETNPGTLLCIGCEEIAKACASTALLLIIQAVGSFPLMHGGRKELLDRIAPRIVNNRELAGYLVSEPGAGSDVKAIRTKAVKDGNDWVINGTKCWATNGPIASFYSCLCRTKDDKGVQGYSFFLVERNTPGLSVGKIEHKMGMRGSQTSEVILEDVRVPAENLLGELNNGFKLAMKDFDMSRPAIAAQALGISEGAFAQMETYSRERYTFGKPLCEHGMITQIIADSAALIEAGRGLIYQAADLYDKGKKNTKLASMAKFFMGDAAVKITTDAIQVFGGYGYTHDYPVERMFRDAKLTQIFEGANQIQRIVVAREIRDEQSK</sequence>
<accession>Q2LQP0</accession>
<gene>
    <name evidence="3" type="ordered locus">SYNAS_02210</name>
    <name evidence="4" type="ORF">SYN_02586</name>
</gene>
<protein>
    <recommendedName>
        <fullName evidence="3">Cyclohexane-1-carbonyl-CoA dehydrogenase</fullName>
        <shortName evidence="2">ChCoA dehydrogenase</shortName>
        <ecNumber evidence="1">1.3.8.11</ecNumber>
    </recommendedName>
</protein>